<keyword id="KW-0963">Cytoplasm</keyword>
<keyword id="KW-1185">Reference proteome</keyword>
<dbReference type="EMBL" id="DQ440258">
    <property type="protein sequence ID" value="ABF18291.1"/>
    <property type="molecule type" value="mRNA"/>
</dbReference>
<dbReference type="EMBL" id="CH477410">
    <property type="protein sequence ID" value="EAT41469.1"/>
    <property type="molecule type" value="Genomic_DNA"/>
</dbReference>
<dbReference type="SMR" id="Q1HR36"/>
<dbReference type="FunCoup" id="Q1HR36">
    <property type="interactions" value="1457"/>
</dbReference>
<dbReference type="STRING" id="7159.Q1HR36"/>
<dbReference type="PaxDb" id="7159-AAEL006885-PA"/>
<dbReference type="EnsemblMetazoa" id="AAEL006885-RA">
    <property type="protein sequence ID" value="AAEL006885-PA"/>
    <property type="gene ID" value="AAEL006885"/>
</dbReference>
<dbReference type="EnsemblMetazoa" id="AAEL006885-RB">
    <property type="protein sequence ID" value="AAEL006885-PB"/>
    <property type="gene ID" value="AAEL006885"/>
</dbReference>
<dbReference type="EnsemblMetazoa" id="AAEL006885-RC">
    <property type="protein sequence ID" value="AAEL006885-PC"/>
    <property type="gene ID" value="AAEL006885"/>
</dbReference>
<dbReference type="EnsemblMetazoa" id="AAEL006885-RD">
    <property type="protein sequence ID" value="AAEL006885-PD"/>
    <property type="gene ID" value="AAEL006885"/>
</dbReference>
<dbReference type="GeneID" id="5568471"/>
<dbReference type="KEGG" id="aag:5568471"/>
<dbReference type="CTD" id="36059"/>
<dbReference type="VEuPathDB" id="VectorBase:AAEL006885"/>
<dbReference type="eggNOG" id="KOG0841">
    <property type="taxonomic scope" value="Eukaryota"/>
</dbReference>
<dbReference type="HOGENOM" id="CLU_058290_1_0_1"/>
<dbReference type="InParanoid" id="Q1HR36"/>
<dbReference type="OMA" id="AECKVFY"/>
<dbReference type="OrthoDB" id="10260625at2759"/>
<dbReference type="PhylomeDB" id="Q1HR36"/>
<dbReference type="Proteomes" id="UP000008820">
    <property type="component" value="Chromosome 2"/>
</dbReference>
<dbReference type="Proteomes" id="UP000682892">
    <property type="component" value="Unassembled WGS sequence"/>
</dbReference>
<dbReference type="GO" id="GO:0005737">
    <property type="term" value="C:cytoplasm"/>
    <property type="evidence" value="ECO:0007669"/>
    <property type="project" value="UniProtKB-SubCell"/>
</dbReference>
<dbReference type="FunFam" id="1.20.190.20:FF:000001">
    <property type="entry name" value="14-3-3 gamma 1"/>
    <property type="match status" value="1"/>
</dbReference>
<dbReference type="Gene3D" id="1.20.190.20">
    <property type="entry name" value="14-3-3 domain"/>
    <property type="match status" value="1"/>
</dbReference>
<dbReference type="InterPro" id="IPR000308">
    <property type="entry name" value="14-3-3"/>
</dbReference>
<dbReference type="InterPro" id="IPR023409">
    <property type="entry name" value="14-3-3_CS"/>
</dbReference>
<dbReference type="InterPro" id="IPR036815">
    <property type="entry name" value="14-3-3_dom_sf"/>
</dbReference>
<dbReference type="InterPro" id="IPR023410">
    <property type="entry name" value="14-3-3_domain"/>
</dbReference>
<dbReference type="PANTHER" id="PTHR18860">
    <property type="entry name" value="14-3-3 PROTEIN"/>
    <property type="match status" value="1"/>
</dbReference>
<dbReference type="Pfam" id="PF00244">
    <property type="entry name" value="14-3-3"/>
    <property type="match status" value="1"/>
</dbReference>
<dbReference type="PIRSF" id="PIRSF000868">
    <property type="entry name" value="14-3-3"/>
    <property type="match status" value="1"/>
</dbReference>
<dbReference type="PRINTS" id="PR00305">
    <property type="entry name" value="1433ZETA"/>
</dbReference>
<dbReference type="SMART" id="SM00101">
    <property type="entry name" value="14_3_3"/>
    <property type="match status" value="1"/>
</dbReference>
<dbReference type="SUPFAM" id="SSF48445">
    <property type="entry name" value="14-3-3 protein"/>
    <property type="match status" value="1"/>
</dbReference>
<dbReference type="PROSITE" id="PS00796">
    <property type="entry name" value="1433_1"/>
    <property type="match status" value="1"/>
</dbReference>
<dbReference type="PROSITE" id="PS00797">
    <property type="entry name" value="1433_2"/>
    <property type="match status" value="1"/>
</dbReference>
<comment type="function">
    <text evidence="1">Adapter protein implicated in the regulation of a large spectrum of both general and specialized signaling pathways. Binds to a large number of partners, usually by recognition of a phosphoserine or phosphothreonine motif. Binding generally results in the modulation of the activity of the binding partner (By similarity).</text>
</comment>
<comment type="subunit">
    <text evidence="1">Homodimer.</text>
</comment>
<comment type="subcellular location">
    <subcellularLocation>
        <location evidence="1">Cytoplasm</location>
    </subcellularLocation>
</comment>
<comment type="similarity">
    <text evidence="2">Belongs to the 14-3-3 family.</text>
</comment>
<organism>
    <name type="scientific">Aedes aegypti</name>
    <name type="common">Yellowfever mosquito</name>
    <name type="synonym">Culex aegypti</name>
    <dbReference type="NCBI Taxonomy" id="7159"/>
    <lineage>
        <taxon>Eukaryota</taxon>
        <taxon>Metazoa</taxon>
        <taxon>Ecdysozoa</taxon>
        <taxon>Arthropoda</taxon>
        <taxon>Hexapoda</taxon>
        <taxon>Insecta</taxon>
        <taxon>Pterygota</taxon>
        <taxon>Neoptera</taxon>
        <taxon>Endopterygota</taxon>
        <taxon>Diptera</taxon>
        <taxon>Nematocera</taxon>
        <taxon>Culicoidea</taxon>
        <taxon>Culicidae</taxon>
        <taxon>Culicinae</taxon>
        <taxon>Aedini</taxon>
        <taxon>Aedes</taxon>
        <taxon>Stegomyia</taxon>
    </lineage>
</organism>
<evidence type="ECO:0000250" key="1"/>
<evidence type="ECO:0000305" key="2"/>
<reference key="1">
    <citation type="journal article" date="2007" name="BMC Genomics">
        <title>An annotated catalogue of salivary gland transcripts in the adult female mosquito, Aedes aegypti.</title>
        <authorList>
            <person name="Ribeiro J.M.C."/>
            <person name="Arca B."/>
            <person name="Lombardo F."/>
            <person name="Calvo E."/>
            <person name="Phan V.M."/>
            <person name="Chandra P.K."/>
            <person name="Wikel S.K."/>
        </authorList>
    </citation>
    <scope>NUCLEOTIDE SEQUENCE [LARGE SCALE MRNA]</scope>
    <source>
        <strain>Black-eyed Liverpool</strain>
        <tissue>Salivary gland</tissue>
    </source>
</reference>
<reference key="2">
    <citation type="journal article" date="2007" name="Science">
        <title>Genome sequence of Aedes aegypti, a major arbovirus vector.</title>
        <authorList>
            <person name="Nene V."/>
            <person name="Wortman J.R."/>
            <person name="Lawson D."/>
            <person name="Haas B.J."/>
            <person name="Kodira C.D."/>
            <person name="Tu Z.J."/>
            <person name="Loftus B.J."/>
            <person name="Xi Z."/>
            <person name="Megy K."/>
            <person name="Grabherr M."/>
            <person name="Ren Q."/>
            <person name="Zdobnov E.M."/>
            <person name="Lobo N.F."/>
            <person name="Campbell K.S."/>
            <person name="Brown S.E."/>
            <person name="Bonaldo M.F."/>
            <person name="Zhu J."/>
            <person name="Sinkins S.P."/>
            <person name="Hogenkamp D.G."/>
            <person name="Amedeo P."/>
            <person name="Arensburger P."/>
            <person name="Atkinson P.W."/>
            <person name="Bidwell S.L."/>
            <person name="Biedler J."/>
            <person name="Birney E."/>
            <person name="Bruggner R.V."/>
            <person name="Costas J."/>
            <person name="Coy M.R."/>
            <person name="Crabtree J."/>
            <person name="Crawford M."/>
            <person name="DeBruyn B."/>
            <person name="DeCaprio D."/>
            <person name="Eiglmeier K."/>
            <person name="Eisenstadt E."/>
            <person name="El-Dorry H."/>
            <person name="Gelbart W.M."/>
            <person name="Gomes S.L."/>
            <person name="Hammond M."/>
            <person name="Hannick L.I."/>
            <person name="Hogan J.R."/>
            <person name="Holmes M.H."/>
            <person name="Jaffe D."/>
            <person name="Johnston S.J."/>
            <person name="Kennedy R.C."/>
            <person name="Koo H."/>
            <person name="Kravitz S."/>
            <person name="Kriventseva E.V."/>
            <person name="Kulp D."/>
            <person name="Labutti K."/>
            <person name="Lee E."/>
            <person name="Li S."/>
            <person name="Lovin D.D."/>
            <person name="Mao C."/>
            <person name="Mauceli E."/>
            <person name="Menck C.F."/>
            <person name="Miller J.R."/>
            <person name="Montgomery P."/>
            <person name="Mori A."/>
            <person name="Nascimento A.L."/>
            <person name="Naveira H.F."/>
            <person name="Nusbaum C."/>
            <person name="O'Leary S.B."/>
            <person name="Orvis J."/>
            <person name="Pertea M."/>
            <person name="Quesneville H."/>
            <person name="Reidenbach K.R."/>
            <person name="Rogers Y.-H.C."/>
            <person name="Roth C.W."/>
            <person name="Schneider J.R."/>
            <person name="Schatz M."/>
            <person name="Shumway M."/>
            <person name="Stanke M."/>
            <person name="Stinson E.O."/>
            <person name="Tubio J.M.C."/>
            <person name="Vanzee J.P."/>
            <person name="Verjovski-Almeida S."/>
            <person name="Werner D."/>
            <person name="White O.R."/>
            <person name="Wyder S."/>
            <person name="Zeng Q."/>
            <person name="Zhao Q."/>
            <person name="Zhao Y."/>
            <person name="Hill C.A."/>
            <person name="Raikhel A.S."/>
            <person name="Soares M.B."/>
            <person name="Knudson D.L."/>
            <person name="Lee N.H."/>
            <person name="Galagan J."/>
            <person name="Salzberg S.L."/>
            <person name="Paulsen I.T."/>
            <person name="Dimopoulos G."/>
            <person name="Collins F.H."/>
            <person name="Bruce B."/>
            <person name="Fraser-Liggett C.M."/>
            <person name="Severson D.W."/>
        </authorList>
    </citation>
    <scope>NUCLEOTIDE SEQUENCE [LARGE SCALE GENOMIC DNA]</scope>
    <source>
        <strain>LVPib12</strain>
    </source>
</reference>
<protein>
    <recommendedName>
        <fullName>14-3-3 protein zeta</fullName>
    </recommendedName>
</protein>
<feature type="chain" id="PRO_0000320250" description="14-3-3 protein zeta">
    <location>
        <begin position="1"/>
        <end position="248"/>
    </location>
</feature>
<gene>
    <name type="primary">14-3-3zeta</name>
    <name type="ORF">AAEL006885</name>
</gene>
<proteinExistence type="evidence at transcript level"/>
<accession>Q1HR36</accession>
<name>1433Z_AEDAE</name>
<sequence>MSTVDKEELVQKAKLAEQSERYDDMAQAMKSVTETGVELSNEERNLLSVAYKNVVGARRSSWRVISSIEQKTESSARKQQLAREYRERVEKELREICYEVLGLLDKFLIPKASNPESKVFYLKMKGDYYRYLAEVATGETRNTVVDDSQAAYQDAFEISKGKMQPTHPIRLGLALNFSVFYYEILNSPDKACQLAKQAFDDAIAELDTLNEDSYKDSTLIMQLLRDNLTLWTSDTQGDGDEPQEGGDN</sequence>